<dbReference type="EC" id="3.6.1.9" evidence="1"/>
<dbReference type="EMBL" id="CP001217">
    <property type="protein sequence ID" value="ACJ08358.1"/>
    <property type="molecule type" value="Genomic_DNA"/>
</dbReference>
<dbReference type="SMR" id="B6JN80"/>
<dbReference type="KEGG" id="hpp:HPP12_1206"/>
<dbReference type="HOGENOM" id="CLU_040416_2_2_7"/>
<dbReference type="Proteomes" id="UP000008198">
    <property type="component" value="Chromosome"/>
</dbReference>
<dbReference type="GO" id="GO:0005737">
    <property type="term" value="C:cytoplasm"/>
    <property type="evidence" value="ECO:0007669"/>
    <property type="project" value="UniProtKB-SubCell"/>
</dbReference>
<dbReference type="GO" id="GO:0047429">
    <property type="term" value="F:nucleoside triphosphate diphosphatase activity"/>
    <property type="evidence" value="ECO:0007669"/>
    <property type="project" value="UniProtKB-EC"/>
</dbReference>
<dbReference type="GO" id="GO:0009117">
    <property type="term" value="P:nucleotide metabolic process"/>
    <property type="evidence" value="ECO:0007669"/>
    <property type="project" value="UniProtKB-KW"/>
</dbReference>
<dbReference type="FunFam" id="3.90.950.10:FF:000013">
    <property type="entry name" value="Nucleoside triphosphate pyrophosphatase"/>
    <property type="match status" value="1"/>
</dbReference>
<dbReference type="Gene3D" id="3.90.950.10">
    <property type="match status" value="1"/>
</dbReference>
<dbReference type="HAMAP" id="MF_00528">
    <property type="entry name" value="Maf"/>
    <property type="match status" value="1"/>
</dbReference>
<dbReference type="InterPro" id="IPR029001">
    <property type="entry name" value="ITPase-like_fam"/>
</dbReference>
<dbReference type="InterPro" id="IPR003697">
    <property type="entry name" value="Maf-like"/>
</dbReference>
<dbReference type="NCBIfam" id="TIGR00172">
    <property type="entry name" value="maf"/>
    <property type="match status" value="1"/>
</dbReference>
<dbReference type="NCBIfam" id="NF003141">
    <property type="entry name" value="PRK04056.1"/>
    <property type="match status" value="1"/>
</dbReference>
<dbReference type="PANTHER" id="PTHR43213">
    <property type="entry name" value="BIFUNCTIONAL DTTP/UTP PYROPHOSPHATASE/METHYLTRANSFERASE PROTEIN-RELATED"/>
    <property type="match status" value="1"/>
</dbReference>
<dbReference type="PANTHER" id="PTHR43213:SF5">
    <property type="entry name" value="BIFUNCTIONAL DTTP_UTP PYROPHOSPHATASE_METHYLTRANSFERASE PROTEIN-RELATED"/>
    <property type="match status" value="1"/>
</dbReference>
<dbReference type="Pfam" id="PF02545">
    <property type="entry name" value="Maf"/>
    <property type="match status" value="1"/>
</dbReference>
<dbReference type="PIRSF" id="PIRSF006305">
    <property type="entry name" value="Maf"/>
    <property type="match status" value="1"/>
</dbReference>
<dbReference type="SUPFAM" id="SSF52972">
    <property type="entry name" value="ITPase-like"/>
    <property type="match status" value="1"/>
</dbReference>
<protein>
    <recommendedName>
        <fullName evidence="1">Nucleoside triphosphate pyrophosphatase</fullName>
        <ecNumber evidence="1">3.6.1.9</ecNumber>
    </recommendedName>
    <alternativeName>
        <fullName evidence="1">Nucleotide pyrophosphatase</fullName>
        <shortName evidence="1">Nucleotide PPase</shortName>
    </alternativeName>
</protein>
<evidence type="ECO:0000255" key="1">
    <source>
        <dbReference type="HAMAP-Rule" id="MF_00528"/>
    </source>
</evidence>
<comment type="function">
    <text evidence="1">Nucleoside triphosphate pyrophosphatase. May have a dual role in cell division arrest and in preventing the incorporation of modified nucleotides into cellular nucleic acids.</text>
</comment>
<comment type="catalytic activity">
    <reaction evidence="1">
        <text>a ribonucleoside 5'-triphosphate + H2O = a ribonucleoside 5'-phosphate + diphosphate + H(+)</text>
        <dbReference type="Rhea" id="RHEA:23996"/>
        <dbReference type="ChEBI" id="CHEBI:15377"/>
        <dbReference type="ChEBI" id="CHEBI:15378"/>
        <dbReference type="ChEBI" id="CHEBI:33019"/>
        <dbReference type="ChEBI" id="CHEBI:58043"/>
        <dbReference type="ChEBI" id="CHEBI:61557"/>
        <dbReference type="EC" id="3.6.1.9"/>
    </reaction>
</comment>
<comment type="catalytic activity">
    <reaction evidence="1">
        <text>a 2'-deoxyribonucleoside 5'-triphosphate + H2O = a 2'-deoxyribonucleoside 5'-phosphate + diphosphate + H(+)</text>
        <dbReference type="Rhea" id="RHEA:44644"/>
        <dbReference type="ChEBI" id="CHEBI:15377"/>
        <dbReference type="ChEBI" id="CHEBI:15378"/>
        <dbReference type="ChEBI" id="CHEBI:33019"/>
        <dbReference type="ChEBI" id="CHEBI:61560"/>
        <dbReference type="ChEBI" id="CHEBI:65317"/>
        <dbReference type="EC" id="3.6.1.9"/>
    </reaction>
</comment>
<comment type="cofactor">
    <cofactor evidence="1">
        <name>a divalent metal cation</name>
        <dbReference type="ChEBI" id="CHEBI:60240"/>
    </cofactor>
</comment>
<comment type="subcellular location">
    <subcellularLocation>
        <location evidence="1">Cytoplasm</location>
    </subcellularLocation>
</comment>
<comment type="similarity">
    <text evidence="1">Belongs to the Maf family.</text>
</comment>
<gene>
    <name type="ordered locus">HPP12_1206</name>
</gene>
<proteinExistence type="inferred from homology"/>
<reference key="1">
    <citation type="submission" date="2008-10" db="EMBL/GenBank/DDBJ databases">
        <title>The complete genome sequence of Helicobacter pylori strain P12.</title>
        <authorList>
            <person name="Fischer W."/>
            <person name="Windhager L."/>
            <person name="Karnholz A."/>
            <person name="Zeiller M."/>
            <person name="Zimmer R."/>
            <person name="Haas R."/>
        </authorList>
    </citation>
    <scope>NUCLEOTIDE SEQUENCE [LARGE SCALE GENOMIC DNA]</scope>
    <source>
        <strain>P12</strain>
    </source>
</reference>
<accession>B6JN80</accession>
<sequence>MELILGSQSSARANLLKEHGIKFEQKALYFDEESLKTTDPREFVYLACKGKLEKAKELLANNCVIVVADSVVSVDNRMQRKAQSKREALEFLKRQNGNEIEVLTCSALISPKLEWLDLSVFRARLKAFDPSEIEKYLESGLWQESAGCVRLEDFHRPYIKSSSKNLSVGLGLNVEGLLGALKLGAKIASL</sequence>
<name>NTPP_HELP2</name>
<keyword id="KW-0963">Cytoplasm</keyword>
<keyword id="KW-0378">Hydrolase</keyword>
<keyword id="KW-0546">Nucleotide metabolism</keyword>
<organism>
    <name type="scientific">Helicobacter pylori (strain P12)</name>
    <dbReference type="NCBI Taxonomy" id="570508"/>
    <lineage>
        <taxon>Bacteria</taxon>
        <taxon>Pseudomonadati</taxon>
        <taxon>Campylobacterota</taxon>
        <taxon>Epsilonproteobacteria</taxon>
        <taxon>Campylobacterales</taxon>
        <taxon>Helicobacteraceae</taxon>
        <taxon>Helicobacter</taxon>
    </lineage>
</organism>
<feature type="chain" id="PRO_1000127787" description="Nucleoside triphosphate pyrophosphatase">
    <location>
        <begin position="1"/>
        <end position="190"/>
    </location>
</feature>
<feature type="active site" description="Proton acceptor" evidence="1">
    <location>
        <position position="69"/>
    </location>
</feature>